<accession>Q74AK4</accession>
<sequence length="631" mass="68731">MEKNGTVHTGTVRQSLGLSLAALGVVYGDIGTSPLYAMRECFHGTHPHPATPDNVLGVLSLIVWALILIVSLKYLVFVLRADNRGEGGILALTALLNPWGDENRPPRKVLVFLGLFGAALLYGDGTLTPAISVLSAIEGLKIATPLFHPYIVPITVVILILLFLIQHRGTARVGALFGPVMVLWFTVLALLGIRGIMMAPEVLGALNPLHAVLFFVRDGWSGFQVLGAVFLVVTGGEALYADMGHFGRLPIRLAWFCCVLPALLLNYFGQGALLLSDPSEATEPFYHLAPPWALYPLVLLATLATIIASQAVISGVFSLTRQAIQLRLSPRMRIVQTSSEEIGQIYIPAVNWALMLATITLVAGFGSSSGLAAAYGVAVATTMVITALLVRFVMLERWHWHPLAVAGLTVVFLTVDLAFFGANILKVGAGGWIPLAAGLAVFTVMITWRRGRELVTTHLLAQATPLPSFLEELAAKPPQRVPGTAVFMSGRLFPAPPTLIHHLEHNKVLHEQVVILTVLTEDIPRVSASERIELKRLGQGFYRLIVRYGFMQSPNVPVILRECEPLGLVTDPETTTFYLGRETLIPTEKVSGMPHWREKLFAFMSRNSLQATAFYNLPPDRVVELGQQVEI</sequence>
<feature type="chain" id="PRO_0000209016" description="Probable potassium transport system protein Kup 1">
    <location>
        <begin position="1"/>
        <end position="631"/>
    </location>
</feature>
<feature type="transmembrane region" description="Helical" evidence="1">
    <location>
        <begin position="16"/>
        <end position="36"/>
    </location>
</feature>
<feature type="transmembrane region" description="Helical" evidence="1">
    <location>
        <begin position="58"/>
        <end position="78"/>
    </location>
</feature>
<feature type="transmembrane region" description="Helical" evidence="1">
    <location>
        <begin position="109"/>
        <end position="129"/>
    </location>
</feature>
<feature type="transmembrane region" description="Helical" evidence="1">
    <location>
        <begin position="145"/>
        <end position="165"/>
    </location>
</feature>
<feature type="transmembrane region" description="Helical" evidence="1">
    <location>
        <begin position="173"/>
        <end position="193"/>
    </location>
</feature>
<feature type="transmembrane region" description="Helical" evidence="1">
    <location>
        <begin position="219"/>
        <end position="239"/>
    </location>
</feature>
<feature type="transmembrane region" description="Helical" evidence="1">
    <location>
        <begin position="255"/>
        <end position="275"/>
    </location>
</feature>
<feature type="transmembrane region" description="Helical" evidence="1">
    <location>
        <begin position="288"/>
        <end position="308"/>
    </location>
</feature>
<feature type="transmembrane region" description="Helical" evidence="1">
    <location>
        <begin position="345"/>
        <end position="365"/>
    </location>
</feature>
<feature type="transmembrane region" description="Helical" evidence="1">
    <location>
        <begin position="370"/>
        <end position="390"/>
    </location>
</feature>
<feature type="transmembrane region" description="Helical" evidence="1">
    <location>
        <begin position="402"/>
        <end position="422"/>
    </location>
</feature>
<feature type="transmembrane region" description="Helical" evidence="1">
    <location>
        <begin position="427"/>
        <end position="447"/>
    </location>
</feature>
<gene>
    <name evidence="1" type="primary">kup1</name>
    <name type="ordered locus">GSU2350</name>
</gene>
<proteinExistence type="inferred from homology"/>
<keyword id="KW-0997">Cell inner membrane</keyword>
<keyword id="KW-1003">Cell membrane</keyword>
<keyword id="KW-0406">Ion transport</keyword>
<keyword id="KW-0472">Membrane</keyword>
<keyword id="KW-0630">Potassium</keyword>
<keyword id="KW-0633">Potassium transport</keyword>
<keyword id="KW-1185">Reference proteome</keyword>
<keyword id="KW-0769">Symport</keyword>
<keyword id="KW-0812">Transmembrane</keyword>
<keyword id="KW-1133">Transmembrane helix</keyword>
<keyword id="KW-0813">Transport</keyword>
<organism>
    <name type="scientific">Geobacter sulfurreducens (strain ATCC 51573 / DSM 12127 / PCA)</name>
    <dbReference type="NCBI Taxonomy" id="243231"/>
    <lineage>
        <taxon>Bacteria</taxon>
        <taxon>Pseudomonadati</taxon>
        <taxon>Thermodesulfobacteriota</taxon>
        <taxon>Desulfuromonadia</taxon>
        <taxon>Geobacterales</taxon>
        <taxon>Geobacteraceae</taxon>
        <taxon>Geobacter</taxon>
    </lineage>
</organism>
<dbReference type="EMBL" id="AE017180">
    <property type="protein sequence ID" value="AAR35724.1"/>
    <property type="molecule type" value="Genomic_DNA"/>
</dbReference>
<dbReference type="RefSeq" id="NP_953397.1">
    <property type="nucleotide sequence ID" value="NC_002939.5"/>
</dbReference>
<dbReference type="RefSeq" id="WP_010942985.1">
    <property type="nucleotide sequence ID" value="NC_002939.5"/>
</dbReference>
<dbReference type="FunCoup" id="Q74AK4">
    <property type="interactions" value="79"/>
</dbReference>
<dbReference type="STRING" id="243231.GSU2350"/>
<dbReference type="EnsemblBacteria" id="AAR35724">
    <property type="protein sequence ID" value="AAR35724"/>
    <property type="gene ID" value="GSU2350"/>
</dbReference>
<dbReference type="KEGG" id="gsu:GSU2350"/>
<dbReference type="PATRIC" id="fig|243231.5.peg.2380"/>
<dbReference type="eggNOG" id="COG3158">
    <property type="taxonomic scope" value="Bacteria"/>
</dbReference>
<dbReference type="HOGENOM" id="CLU_008142_4_2_7"/>
<dbReference type="InParanoid" id="Q74AK4"/>
<dbReference type="OrthoDB" id="9805577at2"/>
<dbReference type="Proteomes" id="UP000000577">
    <property type="component" value="Chromosome"/>
</dbReference>
<dbReference type="GO" id="GO:0016020">
    <property type="term" value="C:membrane"/>
    <property type="evidence" value="ECO:0000318"/>
    <property type="project" value="GO_Central"/>
</dbReference>
<dbReference type="GO" id="GO:0005886">
    <property type="term" value="C:plasma membrane"/>
    <property type="evidence" value="ECO:0007669"/>
    <property type="project" value="UniProtKB-SubCell"/>
</dbReference>
<dbReference type="GO" id="GO:0015079">
    <property type="term" value="F:potassium ion transmembrane transporter activity"/>
    <property type="evidence" value="ECO:0000318"/>
    <property type="project" value="GO_Central"/>
</dbReference>
<dbReference type="GO" id="GO:0015293">
    <property type="term" value="F:symporter activity"/>
    <property type="evidence" value="ECO:0007669"/>
    <property type="project" value="UniProtKB-UniRule"/>
</dbReference>
<dbReference type="GO" id="GO:0006813">
    <property type="term" value="P:potassium ion transport"/>
    <property type="evidence" value="ECO:0000318"/>
    <property type="project" value="GO_Central"/>
</dbReference>
<dbReference type="HAMAP" id="MF_01522">
    <property type="entry name" value="Kup"/>
    <property type="match status" value="1"/>
</dbReference>
<dbReference type="InterPro" id="IPR003855">
    <property type="entry name" value="K+_transporter"/>
</dbReference>
<dbReference type="InterPro" id="IPR053952">
    <property type="entry name" value="K_trans_C"/>
</dbReference>
<dbReference type="InterPro" id="IPR053951">
    <property type="entry name" value="K_trans_N"/>
</dbReference>
<dbReference type="InterPro" id="IPR023051">
    <property type="entry name" value="Kup"/>
</dbReference>
<dbReference type="PANTHER" id="PTHR30540:SF79">
    <property type="entry name" value="LOW AFFINITY POTASSIUM TRANSPORT SYSTEM PROTEIN KUP"/>
    <property type="match status" value="1"/>
</dbReference>
<dbReference type="PANTHER" id="PTHR30540">
    <property type="entry name" value="OSMOTIC STRESS POTASSIUM TRANSPORTER"/>
    <property type="match status" value="1"/>
</dbReference>
<dbReference type="Pfam" id="PF02705">
    <property type="entry name" value="K_trans"/>
    <property type="match status" value="1"/>
</dbReference>
<dbReference type="Pfam" id="PF22776">
    <property type="entry name" value="K_trans_C"/>
    <property type="match status" value="1"/>
</dbReference>
<name>KUP1_GEOSL</name>
<reference key="1">
    <citation type="journal article" date="2003" name="Science">
        <title>Genome of Geobacter sulfurreducens: metal reduction in subsurface environments.</title>
        <authorList>
            <person name="Methe B.A."/>
            <person name="Nelson K.E."/>
            <person name="Eisen J.A."/>
            <person name="Paulsen I.T."/>
            <person name="Nelson W.C."/>
            <person name="Heidelberg J.F."/>
            <person name="Wu D."/>
            <person name="Wu M."/>
            <person name="Ward N.L."/>
            <person name="Beanan M.J."/>
            <person name="Dodson R.J."/>
            <person name="Madupu R."/>
            <person name="Brinkac L.M."/>
            <person name="Daugherty S.C."/>
            <person name="DeBoy R.T."/>
            <person name="Durkin A.S."/>
            <person name="Gwinn M.L."/>
            <person name="Kolonay J.F."/>
            <person name="Sullivan S.A."/>
            <person name="Haft D.H."/>
            <person name="Selengut J."/>
            <person name="Davidsen T.M."/>
            <person name="Zafar N."/>
            <person name="White O."/>
            <person name="Tran B."/>
            <person name="Romero C."/>
            <person name="Forberger H.A."/>
            <person name="Weidman J.F."/>
            <person name="Khouri H.M."/>
            <person name="Feldblyum T.V."/>
            <person name="Utterback T.R."/>
            <person name="Van Aken S.E."/>
            <person name="Lovley D.R."/>
            <person name="Fraser C.M."/>
        </authorList>
    </citation>
    <scope>NUCLEOTIDE SEQUENCE [LARGE SCALE GENOMIC DNA]</scope>
    <source>
        <strain>ATCC 51573 / DSM 12127 / PCA</strain>
    </source>
</reference>
<comment type="function">
    <text evidence="1">Transport of potassium into the cell. Likely operates as a K(+):H(+) symporter.</text>
</comment>
<comment type="catalytic activity">
    <reaction evidence="1">
        <text>K(+)(in) + H(+)(in) = K(+)(out) + H(+)(out)</text>
        <dbReference type="Rhea" id="RHEA:28490"/>
        <dbReference type="ChEBI" id="CHEBI:15378"/>
        <dbReference type="ChEBI" id="CHEBI:29103"/>
    </reaction>
    <physiologicalReaction direction="right-to-left" evidence="1">
        <dbReference type="Rhea" id="RHEA:28492"/>
    </physiologicalReaction>
</comment>
<comment type="subcellular location">
    <subcellularLocation>
        <location evidence="1">Cell inner membrane</location>
        <topology evidence="1">Multi-pass membrane protein</topology>
    </subcellularLocation>
</comment>
<comment type="similarity">
    <text evidence="1">Belongs to the HAK/KUP transporter (TC 2.A.72) family.</text>
</comment>
<evidence type="ECO:0000255" key="1">
    <source>
        <dbReference type="HAMAP-Rule" id="MF_01522"/>
    </source>
</evidence>
<protein>
    <recommendedName>
        <fullName evidence="1">Probable potassium transport system protein Kup 1</fullName>
    </recommendedName>
</protein>